<gene>
    <name evidence="1" type="primary">rpsZ</name>
    <name evidence="1" type="synonym">rpsN</name>
    <name type="ordered locus">Ccel_0771</name>
</gene>
<name>RS14Z_RUMCH</name>
<sequence length="61" mass="7148">MAKKAMIIKQQRTPKFSTRAYNRCKICGRPHAYIRKFGICRLCFRQLAYKGQIPGVKKASW</sequence>
<dbReference type="EMBL" id="CP001348">
    <property type="protein sequence ID" value="ACL75149.1"/>
    <property type="molecule type" value="Genomic_DNA"/>
</dbReference>
<dbReference type="RefSeq" id="WP_015924314.1">
    <property type="nucleotide sequence ID" value="NC_011898.1"/>
</dbReference>
<dbReference type="SMR" id="B8I7Z2"/>
<dbReference type="STRING" id="394503.Ccel_0771"/>
<dbReference type="KEGG" id="cce:Ccel_0771"/>
<dbReference type="eggNOG" id="COG0199">
    <property type="taxonomic scope" value="Bacteria"/>
</dbReference>
<dbReference type="HOGENOM" id="CLU_139869_3_0_9"/>
<dbReference type="OrthoDB" id="9810484at2"/>
<dbReference type="Proteomes" id="UP000001349">
    <property type="component" value="Chromosome"/>
</dbReference>
<dbReference type="GO" id="GO:0005737">
    <property type="term" value="C:cytoplasm"/>
    <property type="evidence" value="ECO:0007669"/>
    <property type="project" value="UniProtKB-ARBA"/>
</dbReference>
<dbReference type="GO" id="GO:0015935">
    <property type="term" value="C:small ribosomal subunit"/>
    <property type="evidence" value="ECO:0007669"/>
    <property type="project" value="TreeGrafter"/>
</dbReference>
<dbReference type="GO" id="GO:0019843">
    <property type="term" value="F:rRNA binding"/>
    <property type="evidence" value="ECO:0007669"/>
    <property type="project" value="UniProtKB-UniRule"/>
</dbReference>
<dbReference type="GO" id="GO:0003735">
    <property type="term" value="F:structural constituent of ribosome"/>
    <property type="evidence" value="ECO:0007669"/>
    <property type="project" value="InterPro"/>
</dbReference>
<dbReference type="GO" id="GO:0008270">
    <property type="term" value="F:zinc ion binding"/>
    <property type="evidence" value="ECO:0007669"/>
    <property type="project" value="UniProtKB-UniRule"/>
</dbReference>
<dbReference type="GO" id="GO:0006412">
    <property type="term" value="P:translation"/>
    <property type="evidence" value="ECO:0007669"/>
    <property type="project" value="UniProtKB-UniRule"/>
</dbReference>
<dbReference type="FunFam" id="4.10.830.10:FF:000001">
    <property type="entry name" value="30S ribosomal protein S14 type Z"/>
    <property type="match status" value="1"/>
</dbReference>
<dbReference type="Gene3D" id="4.10.830.10">
    <property type="entry name" value="30s Ribosomal Protein S14, Chain N"/>
    <property type="match status" value="1"/>
</dbReference>
<dbReference type="HAMAP" id="MF_01364_B">
    <property type="entry name" value="Ribosomal_uS14_2_B"/>
    <property type="match status" value="1"/>
</dbReference>
<dbReference type="InterPro" id="IPR001209">
    <property type="entry name" value="Ribosomal_uS14"/>
</dbReference>
<dbReference type="InterPro" id="IPR023053">
    <property type="entry name" value="Ribosomal_uS14_bact"/>
</dbReference>
<dbReference type="InterPro" id="IPR018271">
    <property type="entry name" value="Ribosomal_uS14_CS"/>
</dbReference>
<dbReference type="InterPro" id="IPR043140">
    <property type="entry name" value="Ribosomal_uS14_sf"/>
</dbReference>
<dbReference type="NCBIfam" id="NF005974">
    <property type="entry name" value="PRK08061.1"/>
    <property type="match status" value="1"/>
</dbReference>
<dbReference type="PANTHER" id="PTHR19836">
    <property type="entry name" value="30S RIBOSOMAL PROTEIN S14"/>
    <property type="match status" value="1"/>
</dbReference>
<dbReference type="PANTHER" id="PTHR19836:SF19">
    <property type="entry name" value="SMALL RIBOSOMAL SUBUNIT PROTEIN US14M"/>
    <property type="match status" value="1"/>
</dbReference>
<dbReference type="Pfam" id="PF00253">
    <property type="entry name" value="Ribosomal_S14"/>
    <property type="match status" value="1"/>
</dbReference>
<dbReference type="SUPFAM" id="SSF57716">
    <property type="entry name" value="Glucocorticoid receptor-like (DNA-binding domain)"/>
    <property type="match status" value="1"/>
</dbReference>
<dbReference type="PROSITE" id="PS00527">
    <property type="entry name" value="RIBOSOMAL_S14"/>
    <property type="match status" value="1"/>
</dbReference>
<accession>B8I7Z2</accession>
<feature type="chain" id="PRO_1000166765" description="Small ribosomal subunit protein uS14">
    <location>
        <begin position="1"/>
        <end position="61"/>
    </location>
</feature>
<feature type="binding site" evidence="1">
    <location>
        <position position="24"/>
    </location>
    <ligand>
        <name>Zn(2+)</name>
        <dbReference type="ChEBI" id="CHEBI:29105"/>
    </ligand>
</feature>
<feature type="binding site" evidence="1">
    <location>
        <position position="27"/>
    </location>
    <ligand>
        <name>Zn(2+)</name>
        <dbReference type="ChEBI" id="CHEBI:29105"/>
    </ligand>
</feature>
<feature type="binding site" evidence="1">
    <location>
        <position position="40"/>
    </location>
    <ligand>
        <name>Zn(2+)</name>
        <dbReference type="ChEBI" id="CHEBI:29105"/>
    </ligand>
</feature>
<feature type="binding site" evidence="1">
    <location>
        <position position="43"/>
    </location>
    <ligand>
        <name>Zn(2+)</name>
        <dbReference type="ChEBI" id="CHEBI:29105"/>
    </ligand>
</feature>
<reference key="1">
    <citation type="submission" date="2009-01" db="EMBL/GenBank/DDBJ databases">
        <title>Complete sequence of Clostridium cellulolyticum H10.</title>
        <authorList>
            <consortium name="US DOE Joint Genome Institute"/>
            <person name="Lucas S."/>
            <person name="Copeland A."/>
            <person name="Lapidus A."/>
            <person name="Glavina del Rio T."/>
            <person name="Dalin E."/>
            <person name="Tice H."/>
            <person name="Bruce D."/>
            <person name="Goodwin L."/>
            <person name="Pitluck S."/>
            <person name="Chertkov O."/>
            <person name="Saunders E."/>
            <person name="Brettin T."/>
            <person name="Detter J.C."/>
            <person name="Han C."/>
            <person name="Larimer F."/>
            <person name="Land M."/>
            <person name="Hauser L."/>
            <person name="Kyrpides N."/>
            <person name="Ivanova N."/>
            <person name="Zhou J."/>
            <person name="Richardson P."/>
        </authorList>
    </citation>
    <scope>NUCLEOTIDE SEQUENCE [LARGE SCALE GENOMIC DNA]</scope>
    <source>
        <strain>ATCC 35319 / DSM 5812 / JCM 6584 / H10</strain>
    </source>
</reference>
<evidence type="ECO:0000255" key="1">
    <source>
        <dbReference type="HAMAP-Rule" id="MF_01364"/>
    </source>
</evidence>
<evidence type="ECO:0000305" key="2"/>
<proteinExistence type="inferred from homology"/>
<organism>
    <name type="scientific">Ruminiclostridium cellulolyticum (strain ATCC 35319 / DSM 5812 / JCM 6584 / H10)</name>
    <name type="common">Clostridium cellulolyticum</name>
    <dbReference type="NCBI Taxonomy" id="394503"/>
    <lineage>
        <taxon>Bacteria</taxon>
        <taxon>Bacillati</taxon>
        <taxon>Bacillota</taxon>
        <taxon>Clostridia</taxon>
        <taxon>Eubacteriales</taxon>
        <taxon>Oscillospiraceae</taxon>
        <taxon>Ruminiclostridium</taxon>
    </lineage>
</organism>
<keyword id="KW-0479">Metal-binding</keyword>
<keyword id="KW-1185">Reference proteome</keyword>
<keyword id="KW-0687">Ribonucleoprotein</keyword>
<keyword id="KW-0689">Ribosomal protein</keyword>
<keyword id="KW-0694">RNA-binding</keyword>
<keyword id="KW-0699">rRNA-binding</keyword>
<keyword id="KW-0862">Zinc</keyword>
<protein>
    <recommendedName>
        <fullName evidence="1">Small ribosomal subunit protein uS14</fullName>
    </recommendedName>
    <alternativeName>
        <fullName evidence="2">30S ribosomal protein S14 type Z</fullName>
    </alternativeName>
</protein>
<comment type="function">
    <text evidence="1">Binds 16S rRNA, required for the assembly of 30S particles and may also be responsible for determining the conformation of the 16S rRNA at the A site.</text>
</comment>
<comment type="cofactor">
    <cofactor evidence="1">
        <name>Zn(2+)</name>
        <dbReference type="ChEBI" id="CHEBI:29105"/>
    </cofactor>
    <text evidence="1">Binds 1 zinc ion per subunit.</text>
</comment>
<comment type="subunit">
    <text evidence="1">Part of the 30S ribosomal subunit. Contacts proteins S3 and S10.</text>
</comment>
<comment type="similarity">
    <text evidence="1">Belongs to the universal ribosomal protein uS14 family. Zinc-binding uS14 subfamily.</text>
</comment>